<accession>B3Q6S6</accession>
<sequence length="102" mass="10374">MTGSDLIGIMILAAGLFAVGVFGVLARRGMLFQLVALEVALSGPALGFIAAGAYHADPEGQGMFILVLTLAAAEVAVGLALFLRLRRLTGTDDSDAISGLKG</sequence>
<comment type="function">
    <text evidence="1">NDH-1 shuttles electrons from NADH, via FMN and iron-sulfur (Fe-S) centers, to quinones in the respiratory chain. The immediate electron acceptor for the enzyme in this species is believed to be ubiquinone. Couples the redox reaction to proton translocation (for every two electrons transferred, four hydrogen ions are translocated across the cytoplasmic membrane), and thus conserves the redox energy in a proton gradient.</text>
</comment>
<comment type="catalytic activity">
    <reaction evidence="1">
        <text>a quinone + NADH + 5 H(+)(in) = a quinol + NAD(+) + 4 H(+)(out)</text>
        <dbReference type="Rhea" id="RHEA:57888"/>
        <dbReference type="ChEBI" id="CHEBI:15378"/>
        <dbReference type="ChEBI" id="CHEBI:24646"/>
        <dbReference type="ChEBI" id="CHEBI:57540"/>
        <dbReference type="ChEBI" id="CHEBI:57945"/>
        <dbReference type="ChEBI" id="CHEBI:132124"/>
    </reaction>
</comment>
<comment type="subunit">
    <text evidence="1">NDH-1 is composed of 14 different subunits. Subunits NuoA, H, J, K, L, M, N constitute the membrane sector of the complex.</text>
</comment>
<comment type="subcellular location">
    <subcellularLocation>
        <location evidence="1">Cell inner membrane</location>
        <topology evidence="1">Multi-pass membrane protein</topology>
    </subcellularLocation>
</comment>
<comment type="similarity">
    <text evidence="1">Belongs to the complex I subunit 4L family.</text>
</comment>
<keyword id="KW-0997">Cell inner membrane</keyword>
<keyword id="KW-1003">Cell membrane</keyword>
<keyword id="KW-0472">Membrane</keyword>
<keyword id="KW-0520">NAD</keyword>
<keyword id="KW-0874">Quinone</keyword>
<keyword id="KW-1278">Translocase</keyword>
<keyword id="KW-0812">Transmembrane</keyword>
<keyword id="KW-1133">Transmembrane helix</keyword>
<keyword id="KW-0813">Transport</keyword>
<keyword id="KW-0830">Ubiquinone</keyword>
<organism>
    <name type="scientific">Rhodopseudomonas palustris (strain TIE-1)</name>
    <dbReference type="NCBI Taxonomy" id="395960"/>
    <lineage>
        <taxon>Bacteria</taxon>
        <taxon>Pseudomonadati</taxon>
        <taxon>Pseudomonadota</taxon>
        <taxon>Alphaproteobacteria</taxon>
        <taxon>Hyphomicrobiales</taxon>
        <taxon>Nitrobacteraceae</taxon>
        <taxon>Rhodopseudomonas</taxon>
    </lineage>
</organism>
<proteinExistence type="inferred from homology"/>
<dbReference type="EC" id="7.1.1.-" evidence="1"/>
<dbReference type="EMBL" id="CP001096">
    <property type="protein sequence ID" value="ACF03225.1"/>
    <property type="molecule type" value="Genomic_DNA"/>
</dbReference>
<dbReference type="RefSeq" id="WP_011159790.1">
    <property type="nucleotide sequence ID" value="NC_011004.1"/>
</dbReference>
<dbReference type="SMR" id="B3Q6S6"/>
<dbReference type="GeneID" id="66895381"/>
<dbReference type="KEGG" id="rpt:Rpal_4734"/>
<dbReference type="HOGENOM" id="CLU_144724_0_1_5"/>
<dbReference type="OrthoDB" id="9810120at2"/>
<dbReference type="Proteomes" id="UP000001725">
    <property type="component" value="Chromosome"/>
</dbReference>
<dbReference type="GO" id="GO:0030964">
    <property type="term" value="C:NADH dehydrogenase complex"/>
    <property type="evidence" value="ECO:0007669"/>
    <property type="project" value="TreeGrafter"/>
</dbReference>
<dbReference type="GO" id="GO:0005886">
    <property type="term" value="C:plasma membrane"/>
    <property type="evidence" value="ECO:0007669"/>
    <property type="project" value="UniProtKB-SubCell"/>
</dbReference>
<dbReference type="GO" id="GO:0050136">
    <property type="term" value="F:NADH:ubiquinone reductase (non-electrogenic) activity"/>
    <property type="evidence" value="ECO:0007669"/>
    <property type="project" value="UniProtKB-UniRule"/>
</dbReference>
<dbReference type="GO" id="GO:0048038">
    <property type="term" value="F:quinone binding"/>
    <property type="evidence" value="ECO:0007669"/>
    <property type="project" value="UniProtKB-KW"/>
</dbReference>
<dbReference type="GO" id="GO:0042773">
    <property type="term" value="P:ATP synthesis coupled electron transport"/>
    <property type="evidence" value="ECO:0007669"/>
    <property type="project" value="InterPro"/>
</dbReference>
<dbReference type="Gene3D" id="1.10.287.3510">
    <property type="match status" value="1"/>
</dbReference>
<dbReference type="HAMAP" id="MF_01456">
    <property type="entry name" value="NDH1_NuoK"/>
    <property type="match status" value="1"/>
</dbReference>
<dbReference type="InterPro" id="IPR001133">
    <property type="entry name" value="NADH_UbQ_OxRdtase_chain4L/K"/>
</dbReference>
<dbReference type="InterPro" id="IPR039428">
    <property type="entry name" value="NUOK/Mnh_C1-like"/>
</dbReference>
<dbReference type="NCBIfam" id="NF004320">
    <property type="entry name" value="PRK05715.1-2"/>
    <property type="match status" value="1"/>
</dbReference>
<dbReference type="PANTHER" id="PTHR11434:SF16">
    <property type="entry name" value="NADH-UBIQUINONE OXIDOREDUCTASE CHAIN 4L"/>
    <property type="match status" value="1"/>
</dbReference>
<dbReference type="PANTHER" id="PTHR11434">
    <property type="entry name" value="NADH-UBIQUINONE OXIDOREDUCTASE SUBUNIT ND4L"/>
    <property type="match status" value="1"/>
</dbReference>
<dbReference type="Pfam" id="PF00420">
    <property type="entry name" value="Oxidored_q2"/>
    <property type="match status" value="1"/>
</dbReference>
<gene>
    <name evidence="1" type="primary">nuoK</name>
    <name type="ordered locus">Rpal_4734</name>
</gene>
<reference key="1">
    <citation type="submission" date="2008-05" db="EMBL/GenBank/DDBJ databases">
        <title>Complete sequence of Rhodopseudomonas palustris TIE-1.</title>
        <authorList>
            <consortium name="US DOE Joint Genome Institute"/>
            <person name="Lucas S."/>
            <person name="Copeland A."/>
            <person name="Lapidus A."/>
            <person name="Glavina del Rio T."/>
            <person name="Dalin E."/>
            <person name="Tice H."/>
            <person name="Pitluck S."/>
            <person name="Chain P."/>
            <person name="Malfatti S."/>
            <person name="Shin M."/>
            <person name="Vergez L."/>
            <person name="Lang D."/>
            <person name="Schmutz J."/>
            <person name="Larimer F."/>
            <person name="Land M."/>
            <person name="Hauser L."/>
            <person name="Kyrpides N."/>
            <person name="Mikhailova N."/>
            <person name="Emerson D."/>
            <person name="Newman D.K."/>
            <person name="Roden E."/>
            <person name="Richardson P."/>
        </authorList>
    </citation>
    <scope>NUCLEOTIDE SEQUENCE [LARGE SCALE GENOMIC DNA]</scope>
    <source>
        <strain>TIE-1</strain>
    </source>
</reference>
<feature type="chain" id="PRO_5000377184" description="NADH-quinone oxidoreductase subunit K">
    <location>
        <begin position="1"/>
        <end position="102"/>
    </location>
</feature>
<feature type="transmembrane region" description="Helical" evidence="1">
    <location>
        <begin position="6"/>
        <end position="26"/>
    </location>
</feature>
<feature type="transmembrane region" description="Helical" evidence="1">
    <location>
        <begin position="30"/>
        <end position="50"/>
    </location>
</feature>
<feature type="transmembrane region" description="Helical" evidence="1">
    <location>
        <begin position="63"/>
        <end position="83"/>
    </location>
</feature>
<evidence type="ECO:0000255" key="1">
    <source>
        <dbReference type="HAMAP-Rule" id="MF_01456"/>
    </source>
</evidence>
<protein>
    <recommendedName>
        <fullName evidence="1">NADH-quinone oxidoreductase subunit K</fullName>
        <ecNumber evidence="1">7.1.1.-</ecNumber>
    </recommendedName>
    <alternativeName>
        <fullName evidence="1">NADH dehydrogenase I subunit K</fullName>
    </alternativeName>
    <alternativeName>
        <fullName evidence="1">NDH-1 subunit K</fullName>
    </alternativeName>
</protein>
<name>NUOK_RHOPT</name>